<evidence type="ECO:0000250" key="1"/>
<evidence type="ECO:0000250" key="2">
    <source>
        <dbReference type="UniProtKB" id="O43399"/>
    </source>
</evidence>
<evidence type="ECO:0000250" key="3">
    <source>
        <dbReference type="UniProtKB" id="Q9CYZ2"/>
    </source>
</evidence>
<evidence type="ECO:0000255" key="4"/>
<evidence type="ECO:0000256" key="5">
    <source>
        <dbReference type="SAM" id="MobiDB-lite"/>
    </source>
</evidence>
<evidence type="ECO:0000305" key="6"/>
<feature type="chain" id="PRO_0000185746" description="Tumor protein D54">
    <location>
        <begin position="1"/>
        <end position="206"/>
    </location>
</feature>
<feature type="region of interest" description="Disordered" evidence="5">
    <location>
        <begin position="1"/>
        <end position="24"/>
    </location>
</feature>
<feature type="region of interest" description="Disordered" evidence="5">
    <location>
        <begin position="175"/>
        <end position="206"/>
    </location>
</feature>
<feature type="coiled-coil region" evidence="4">
    <location>
        <begin position="38"/>
        <end position="82"/>
    </location>
</feature>
<feature type="compositionally biased region" description="Polar residues" evidence="5">
    <location>
        <begin position="1"/>
        <end position="14"/>
    </location>
</feature>
<feature type="compositionally biased region" description="Basic and acidic residues" evidence="5">
    <location>
        <begin position="175"/>
        <end position="185"/>
    </location>
</feature>
<feature type="modified residue" description="N-acetylmethionine" evidence="2">
    <location>
        <position position="1"/>
    </location>
</feature>
<feature type="modified residue" description="Phosphoserine" evidence="2">
    <location>
        <position position="3"/>
    </location>
</feature>
<feature type="modified residue" description="Phosphoserine" evidence="2">
    <location>
        <position position="12"/>
    </location>
</feature>
<feature type="modified residue" description="Phosphoserine" evidence="2">
    <location>
        <position position="19"/>
    </location>
</feature>
<feature type="modified residue" description="Phosphoserine" evidence="2">
    <location>
        <position position="21"/>
    </location>
</feature>
<feature type="modified residue" description="Phosphoserine" evidence="2">
    <location>
        <position position="96"/>
    </location>
</feature>
<feature type="modified residue" description="Phosphoserine" evidence="2">
    <location>
        <position position="149"/>
    </location>
</feature>
<feature type="modified residue" description="Phosphoserine" evidence="2">
    <location>
        <position position="161"/>
    </location>
</feature>
<feature type="modified residue" description="Phosphothreonine" evidence="2">
    <location>
        <position position="163"/>
    </location>
</feature>
<feature type="modified residue" description="Phosphoserine" evidence="2">
    <location>
        <position position="166"/>
    </location>
</feature>
<feature type="modified residue" description="Phosphothreonine" evidence="2">
    <location>
        <position position="173"/>
    </location>
</feature>
<feature type="modified residue" description="Phosphoserine" evidence="3">
    <location>
        <position position="192"/>
    </location>
</feature>
<feature type="modified residue" description="Phosphoserine" evidence="2">
    <location>
        <position position="195"/>
    </location>
</feature>
<protein>
    <recommendedName>
        <fullName>Tumor protein D54</fullName>
    </recommendedName>
    <alternativeName>
        <fullName>Tumor protein D52-like 2</fullName>
    </alternativeName>
</protein>
<reference key="1">
    <citation type="submission" date="2004-11" db="EMBL/GenBank/DDBJ databases">
        <authorList>
            <consortium name="The German cDNA consortium"/>
        </authorList>
    </citation>
    <scope>NUCLEOTIDE SEQUENCE [LARGE SCALE MRNA]</scope>
    <source>
        <tissue>Kidney</tissue>
    </source>
</reference>
<name>TPD54_PONAB</name>
<keyword id="KW-0007">Acetylation</keyword>
<keyword id="KW-0175">Coiled coil</keyword>
<keyword id="KW-0597">Phosphoprotein</keyword>
<keyword id="KW-1185">Reference proteome</keyword>
<proteinExistence type="evidence at transcript level"/>
<gene>
    <name type="primary">TPD52L2</name>
</gene>
<comment type="subunit">
    <text evidence="1">Forms a homodimer or heterodimer with other members of the family. Interacts with MAL2 (By similarity).</text>
</comment>
<comment type="similarity">
    <text evidence="6">Belongs to the TPD52 family.</text>
</comment>
<dbReference type="EMBL" id="CR858187">
    <property type="protein sequence ID" value="CAH90426.1"/>
    <property type="molecule type" value="mRNA"/>
</dbReference>
<dbReference type="RefSeq" id="NP_001125212.1">
    <property type="nucleotide sequence ID" value="NM_001131740.1"/>
</dbReference>
<dbReference type="SMR" id="Q5RCT1"/>
<dbReference type="FunCoup" id="Q5RCT1">
    <property type="interactions" value="2309"/>
</dbReference>
<dbReference type="STRING" id="9601.ENSPPYP00000012569"/>
<dbReference type="GeneID" id="100172104"/>
<dbReference type="KEGG" id="pon:100172104"/>
<dbReference type="CTD" id="7165"/>
<dbReference type="HOGENOM" id="CLU_080743_1_0_1"/>
<dbReference type="InParanoid" id="Q5RCT1"/>
<dbReference type="OrthoDB" id="10000687at2759"/>
<dbReference type="Proteomes" id="UP000001595">
    <property type="component" value="Unplaced"/>
</dbReference>
<dbReference type="GO" id="GO:0005737">
    <property type="term" value="C:cytoplasm"/>
    <property type="evidence" value="ECO:0000250"/>
    <property type="project" value="UniProtKB"/>
</dbReference>
<dbReference type="GO" id="GO:0048471">
    <property type="term" value="C:perinuclear region of cytoplasm"/>
    <property type="evidence" value="ECO:0000250"/>
    <property type="project" value="UniProtKB"/>
</dbReference>
<dbReference type="InterPro" id="IPR007327">
    <property type="entry name" value="TPD52"/>
</dbReference>
<dbReference type="PANTHER" id="PTHR19307">
    <property type="entry name" value="TUMOR PROTEIN D52"/>
    <property type="match status" value="1"/>
</dbReference>
<dbReference type="PANTHER" id="PTHR19307:SF13">
    <property type="entry name" value="TUMOR PROTEIN D54"/>
    <property type="match status" value="1"/>
</dbReference>
<dbReference type="Pfam" id="PF04201">
    <property type="entry name" value="TPD52"/>
    <property type="match status" value="2"/>
</dbReference>
<sequence>MDSAGQDINLNSPNKGLLSDSMTDVPVDTGVAARTPAVEGLTEAEEEELRAELTKVEEEIVTLRQVLAAKERHCGELKRRLGLSTLGGLKQNLSRSWHDVQVSNAYVKTSEKLGEWNEKVTQSDLYKKTQETLSQAGQKTSAALSTMGSAISRKLGDMRNSATFKSFEDRVGTIKSKVVGDRENGSDSLPSSAGSGDKPLSDPAPF</sequence>
<organism>
    <name type="scientific">Pongo abelii</name>
    <name type="common">Sumatran orangutan</name>
    <name type="synonym">Pongo pygmaeus abelii</name>
    <dbReference type="NCBI Taxonomy" id="9601"/>
    <lineage>
        <taxon>Eukaryota</taxon>
        <taxon>Metazoa</taxon>
        <taxon>Chordata</taxon>
        <taxon>Craniata</taxon>
        <taxon>Vertebrata</taxon>
        <taxon>Euteleostomi</taxon>
        <taxon>Mammalia</taxon>
        <taxon>Eutheria</taxon>
        <taxon>Euarchontoglires</taxon>
        <taxon>Primates</taxon>
        <taxon>Haplorrhini</taxon>
        <taxon>Catarrhini</taxon>
        <taxon>Hominidae</taxon>
        <taxon>Pongo</taxon>
    </lineage>
</organism>
<accession>Q5RCT1</accession>